<protein>
    <recommendedName>
        <fullName evidence="2">Pre-glycoprotein polyprotein GP complex</fullName>
        <shortName evidence="2">Pre-GP-C</shortName>
    </recommendedName>
    <component>
        <recommendedName>
            <fullName evidence="2">Stable signal peptide</fullName>
            <shortName evidence="2">SSP</shortName>
        </recommendedName>
    </component>
    <component>
        <recommendedName>
            <fullName evidence="2">Glycoprotein G1</fullName>
            <shortName evidence="2">GP1</shortName>
        </recommendedName>
    </component>
    <component>
        <recommendedName>
            <fullName evidence="2">Glycoprotein G2</fullName>
            <shortName evidence="2">GP2</shortName>
        </recommendedName>
    </component>
</protein>
<accession>Q90037</accession>
<sequence>MGQLFSFFEEVPNIIHEAINIALIAVSLIAALKGMINLWKSGLFQLIFFLTLAGRSCSFRIGRSTELQNITFDMLKVFEDHPTSCMVNHSTYYVHENKNATWCLEVSVTDVTLLMAEHDRQVLNNLSNCVHPAVEHRSRMVGLLEWIFRALKYDFNHDPTPLCQKQTSTVNETRVQINITEGFGSHGFEDTILQRLGVLFGSRIAFSNIQDLGKKRFLLIRNSTWKNQCEMNHVNSMHLMLANAGRSSGSRRPLGIFSWTITDAVGNDMPGGYCLERWMLVTSDLKCFGNTALAKCNLDHDSEFCDMLKLFEFNKKAIETLNDNTKNKVNLLTHSINALISDNLLMKNRLKELLNTPYCNYTKFWYVNHTASGEHSLPRCWLVRNNSYLNESEFRNDWIIESDHLLSEMLNKEYIDRQGKTPLTLVDICFWSTLFFTTTLFLHLVGFPTHRHIRGEPCPLPHRLNSRGGCRCGKYPELKKPITWHKNH</sequence>
<proteinExistence type="evidence at protein level"/>
<reference key="1">
    <citation type="journal article" date="1996" name="Virology">
        <title>Genetic characterization and phylogeny of Sabia virus, an emergent pathogen in Brazil.</title>
        <authorList>
            <person name="Gonzalez J.P."/>
            <person name="Bowen M.D."/>
            <person name="Nichol S.T."/>
            <person name="Rico-Hesse R."/>
        </authorList>
    </citation>
    <scope>NUCLEOTIDE SEQUENCE [GENOMIC RNA]</scope>
</reference>
<reference key="2">
    <citation type="submission" date="1995-11" db="EMBL/GenBank/DDBJ databases">
        <authorList>
            <person name="Gonzalez J.P.J."/>
            <person name="Bowen M.D."/>
            <person name="Nichol S.T."/>
            <person name="Rico-Hesse R."/>
        </authorList>
    </citation>
    <scope>NUCLEOTIDE SEQUENCE [GENOMIC RNA]</scope>
</reference>
<reference key="3">
    <citation type="journal article" date="2007" name="Nature">
        <title>Transferrin receptor 1 is a cellular receptor for New World haemorrhagic fever arenaviruses.</title>
        <authorList>
            <person name="Radoshitzky S.R."/>
            <person name="Abraham J."/>
            <person name="Spiropoulou C.F."/>
            <person name="Kuhn J.H."/>
            <person name="Nguyen D."/>
            <person name="Li W."/>
            <person name="Nagel J."/>
            <person name="Schmidt P.J."/>
            <person name="Nunberg J.H."/>
            <person name="Andrews N.C."/>
            <person name="Farzan M."/>
            <person name="Choe H."/>
        </authorList>
    </citation>
    <scope>INTERACTION WITH HOST TFRC</scope>
</reference>
<name>GLYC_SABVB</name>
<keyword id="KW-1015">Disulfide bond</keyword>
<keyword id="KW-1170">Fusion of virus membrane with host endosomal membrane</keyword>
<keyword id="KW-1168">Fusion of virus membrane with host membrane</keyword>
<keyword id="KW-0325">Glycoprotein</keyword>
<keyword id="KW-1032">Host cell membrane</keyword>
<keyword id="KW-1038">Host endoplasmic reticulum</keyword>
<keyword id="KW-1040">Host Golgi apparatus</keyword>
<keyword id="KW-1043">Host membrane</keyword>
<keyword id="KW-0945">Host-virus interaction</keyword>
<keyword id="KW-0449">Lipoprotein</keyword>
<keyword id="KW-0472">Membrane</keyword>
<keyword id="KW-0479">Metal-binding</keyword>
<keyword id="KW-0519">Myristate</keyword>
<keyword id="KW-0812">Transmembrane</keyword>
<keyword id="KW-1133">Transmembrane helix</keyword>
<keyword id="KW-1161">Viral attachment to host cell</keyword>
<keyword id="KW-0261">Viral envelope protein</keyword>
<keyword id="KW-1162">Viral penetration into host cytoplasm</keyword>
<keyword id="KW-0946">Virion</keyword>
<keyword id="KW-1164">Virus endocytosis by host</keyword>
<keyword id="KW-1160">Virus entry into host cell</keyword>
<keyword id="KW-0862">Zinc</keyword>
<organismHost>
    <name type="scientific">Homo sapiens</name>
    <name type="common">Human</name>
    <dbReference type="NCBI Taxonomy" id="9606"/>
</organismHost>
<feature type="initiator methionine" description="Removed; by host" evidence="2">
    <location>
        <position position="1"/>
    </location>
</feature>
<feature type="chain" id="PRO_0000361620" description="Pre-glycoprotein polyprotein GP complex" evidence="2">
    <location>
        <begin position="2"/>
        <end position="488"/>
    </location>
</feature>
<feature type="chain" id="PRO_0000361621" description="Stable signal peptide" evidence="2">
    <location>
        <begin position="2"/>
        <end position="58"/>
    </location>
</feature>
<feature type="chain" id="PRO_0000361622" description="Glycoprotein G1" evidence="2">
    <location>
        <begin position="59"/>
        <end position="254"/>
    </location>
</feature>
<feature type="chain" id="PRO_0000361623" description="Glycoprotein G2" evidence="2">
    <location>
        <begin position="255"/>
        <end position="488"/>
    </location>
</feature>
<feature type="topological domain" description="Extracellular" evidence="2">
    <location>
        <begin position="2"/>
        <end position="17"/>
    </location>
</feature>
<feature type="transmembrane region" description="Helical" evidence="2">
    <location>
        <begin position="18"/>
        <end position="32"/>
    </location>
</feature>
<feature type="topological domain" description="Cytoplasmic" evidence="2">
    <location>
        <position position="33"/>
    </location>
</feature>
<feature type="transmembrane region" description="Helical" evidence="2">
    <location>
        <begin position="34"/>
        <end position="53"/>
    </location>
</feature>
<feature type="topological domain" description="Extracellular" evidence="2">
    <location>
        <begin position="54"/>
        <end position="58"/>
    </location>
</feature>
<feature type="topological domain" description="Extracellular" evidence="2">
    <location>
        <begin position="59"/>
        <end position="427"/>
    </location>
</feature>
<feature type="transmembrane region" description="Helical" evidence="2">
    <location>
        <begin position="428"/>
        <end position="448"/>
    </location>
</feature>
<feature type="topological domain" description="Cytoplasmic" evidence="2">
    <location>
        <begin position="449"/>
        <end position="488"/>
    </location>
</feature>
<feature type="binding site" evidence="2">
    <location>
        <position position="57"/>
    </location>
    <ligand>
        <name>Zn(2+)</name>
        <dbReference type="ChEBI" id="CHEBI:29105"/>
        <label>1</label>
    </ligand>
</feature>
<feature type="binding site" evidence="2">
    <location>
        <position position="450"/>
    </location>
    <ligand>
        <name>Zn(2+)</name>
        <dbReference type="ChEBI" id="CHEBI:29105"/>
        <label>2</label>
    </ligand>
</feature>
<feature type="binding site" evidence="2">
    <location>
        <position position="452"/>
    </location>
    <ligand>
        <name>Zn(2+)</name>
        <dbReference type="ChEBI" id="CHEBI:29105"/>
        <label>2</label>
    </ligand>
</feature>
<feature type="binding site" evidence="2">
    <location>
        <position position="458"/>
    </location>
    <ligand>
        <name>Zn(2+)</name>
        <dbReference type="ChEBI" id="CHEBI:29105"/>
        <label>2</label>
    </ligand>
</feature>
<feature type="binding site" evidence="2">
    <location>
        <position position="462"/>
    </location>
    <ligand>
        <name>Zn(2+)</name>
        <dbReference type="ChEBI" id="CHEBI:29105"/>
        <label>1</label>
    </ligand>
</feature>
<feature type="binding site" evidence="2">
    <location>
        <position position="470"/>
    </location>
    <ligand>
        <name>Zn(2+)</name>
        <dbReference type="ChEBI" id="CHEBI:29105"/>
        <label>1</label>
    </ligand>
</feature>
<feature type="binding site" evidence="2">
    <location>
        <position position="472"/>
    </location>
    <ligand>
        <name>Zn(2+)</name>
        <dbReference type="ChEBI" id="CHEBI:29105"/>
        <label>1</label>
    </ligand>
</feature>
<feature type="binding site" evidence="2">
    <location>
        <position position="488"/>
    </location>
    <ligand>
        <name>Zn(2+)</name>
        <dbReference type="ChEBI" id="CHEBI:29105"/>
        <label>2</label>
    </ligand>
</feature>
<feature type="site" description="Important for GP-C-mediated membrane fusion" evidence="1">
    <location>
        <position position="33"/>
    </location>
</feature>
<feature type="site" description="Cleavage; by host signal peptidase" evidence="2">
    <location>
        <begin position="58"/>
        <end position="59"/>
    </location>
</feature>
<feature type="site" description="Cleavage; by host MBTPS1" evidence="2">
    <location>
        <begin position="254"/>
        <end position="255"/>
    </location>
</feature>
<feature type="lipid moiety-binding region" description="N-myristoyl glycine; by host" evidence="2">
    <location>
        <position position="2"/>
    </location>
</feature>
<feature type="glycosylation site" description="N-linked (GlcNAc...) asparagine; by host" evidence="2">
    <location>
        <position position="69"/>
    </location>
</feature>
<feature type="glycosylation site" description="N-linked (GlcNAc...) asparagine; by host" evidence="2">
    <location>
        <position position="88"/>
    </location>
</feature>
<feature type="glycosylation site" description="N-linked (GlcNAc...) asparagine; by host" evidence="2">
    <location>
        <position position="99"/>
    </location>
</feature>
<feature type="glycosylation site" description="N-linked (GlcNAc...) asparagine; by host" evidence="2">
    <location>
        <position position="125"/>
    </location>
</feature>
<feature type="glycosylation site" description="N-linked (GlcNAc...) asparagine; by host" evidence="2">
    <location>
        <position position="171"/>
    </location>
</feature>
<feature type="glycosylation site" description="N-linked (GlcNAc...) asparagine; by host" evidence="2">
    <location>
        <position position="178"/>
    </location>
</feature>
<feature type="glycosylation site" description="N-linked (GlcNAc...) asparagine; by host" evidence="2">
    <location>
        <position position="222"/>
    </location>
</feature>
<feature type="glycosylation site" description="N-linked (GlcNAc...) asparagine; by host" evidence="2">
    <location>
        <position position="360"/>
    </location>
</feature>
<feature type="glycosylation site" description="N-linked (GlcNAc...) asparagine; by host" evidence="2">
    <location>
        <position position="368"/>
    </location>
</feature>
<feature type="glycosylation site" description="N-linked (GlcNAc...) asparagine; by host" evidence="2">
    <location>
        <position position="385"/>
    </location>
</feature>
<feature type="glycosylation site" description="N-linked (GlcNAc...) asparagine; by host" evidence="2">
    <location>
        <position position="390"/>
    </location>
</feature>
<feature type="disulfide bond" evidence="2">
    <location>
        <begin position="85"/>
        <end position="229"/>
    </location>
</feature>
<feature type="disulfide bond" evidence="2">
    <location>
        <begin position="274"/>
        <end position="287"/>
    </location>
</feature>
<feature type="disulfide bond" evidence="2">
    <location>
        <begin position="296"/>
        <end position="305"/>
    </location>
</feature>
<feature type="disulfide bond" evidence="2">
    <location>
        <begin position="359"/>
        <end position="380"/>
    </location>
</feature>
<gene>
    <name evidence="2" type="primary">GPC</name>
    <name type="synonym">GP-C</name>
</gene>
<evidence type="ECO:0000250" key="1">
    <source>
        <dbReference type="UniProtKB" id="P26313"/>
    </source>
</evidence>
<evidence type="ECO:0000255" key="2">
    <source>
        <dbReference type="HAMAP-Rule" id="MF_04084"/>
    </source>
</evidence>
<evidence type="ECO:0000269" key="3">
    <source>
    </source>
</evidence>
<dbReference type="EMBL" id="U41071">
    <property type="protein sequence ID" value="AAC55091.1"/>
    <property type="molecule type" value="Genomic_RNA"/>
</dbReference>
<dbReference type="SMR" id="Q90037"/>
<dbReference type="GlyCosmos" id="Q90037">
    <property type="glycosylation" value="11 sites, No reported glycans"/>
</dbReference>
<dbReference type="Proteomes" id="UP000009267">
    <property type="component" value="Genome"/>
</dbReference>
<dbReference type="GO" id="GO:0044167">
    <property type="term" value="C:host cell endoplasmic reticulum membrane"/>
    <property type="evidence" value="ECO:0007669"/>
    <property type="project" value="UniProtKB-SubCell"/>
</dbReference>
<dbReference type="GO" id="GO:0044178">
    <property type="term" value="C:host cell Golgi membrane"/>
    <property type="evidence" value="ECO:0007669"/>
    <property type="project" value="UniProtKB-SubCell"/>
</dbReference>
<dbReference type="GO" id="GO:0020002">
    <property type="term" value="C:host cell plasma membrane"/>
    <property type="evidence" value="ECO:0007669"/>
    <property type="project" value="UniProtKB-SubCell"/>
</dbReference>
<dbReference type="GO" id="GO:0016020">
    <property type="term" value="C:membrane"/>
    <property type="evidence" value="ECO:0007669"/>
    <property type="project" value="UniProtKB-UniRule"/>
</dbReference>
<dbReference type="GO" id="GO:0019031">
    <property type="term" value="C:viral envelope"/>
    <property type="evidence" value="ECO:0007669"/>
    <property type="project" value="UniProtKB-UniRule"/>
</dbReference>
<dbReference type="GO" id="GO:0055036">
    <property type="term" value="C:virion membrane"/>
    <property type="evidence" value="ECO:0007669"/>
    <property type="project" value="UniProtKB-SubCell"/>
</dbReference>
<dbReference type="GO" id="GO:0046872">
    <property type="term" value="F:metal ion binding"/>
    <property type="evidence" value="ECO:0007669"/>
    <property type="project" value="UniProtKB-KW"/>
</dbReference>
<dbReference type="GO" id="GO:0039654">
    <property type="term" value="P:fusion of virus membrane with host endosome membrane"/>
    <property type="evidence" value="ECO:0007669"/>
    <property type="project" value="UniProtKB-UniRule"/>
</dbReference>
<dbReference type="GO" id="GO:0019065">
    <property type="term" value="P:receptor-mediated endocytosis of virus by host cell"/>
    <property type="evidence" value="ECO:0007669"/>
    <property type="project" value="UniProtKB-UniRule"/>
</dbReference>
<dbReference type="GO" id="GO:0019062">
    <property type="term" value="P:virion attachment to host cell"/>
    <property type="evidence" value="ECO:0007669"/>
    <property type="project" value="UniProtKB-UniRule"/>
</dbReference>
<dbReference type="Gene3D" id="6.10.140.1590">
    <property type="match status" value="1"/>
</dbReference>
<dbReference type="Gene3D" id="2.20.28.180">
    <property type="entry name" value="Arenavirus glycoprotein, zinc binding domain"/>
    <property type="match status" value="1"/>
</dbReference>
<dbReference type="HAMAP" id="MF_04084">
    <property type="entry name" value="ARENA_GPC"/>
    <property type="match status" value="1"/>
</dbReference>
<dbReference type="InterPro" id="IPR001535">
    <property type="entry name" value="Arena_glycoprot"/>
</dbReference>
<dbReference type="InterPro" id="IPR043015">
    <property type="entry name" value="Arena_glycoprot_zinc-bd"/>
</dbReference>
<dbReference type="Pfam" id="PF00798">
    <property type="entry name" value="Arena_glycoprot"/>
    <property type="match status" value="1"/>
</dbReference>
<dbReference type="PIRSF" id="PIRSF004028">
    <property type="entry name" value="GPC_ArenaV"/>
    <property type="match status" value="1"/>
</dbReference>
<organism>
    <name type="scientific">Sabia mammarenavirus (isolate Human/Brasil/SPH114202/1990)</name>
    <name type="common">SABV</name>
    <name type="synonym">Sabi mammarenavirus</name>
    <dbReference type="NCBI Taxonomy" id="3052299"/>
    <lineage>
        <taxon>Viruses</taxon>
        <taxon>Riboviria</taxon>
        <taxon>Orthornavirae</taxon>
        <taxon>Negarnaviricota</taxon>
        <taxon>Polyploviricotina</taxon>
        <taxon>Ellioviricetes</taxon>
        <taxon>Bunyavirales</taxon>
        <taxon>Arenaviridae</taxon>
        <taxon>Mammarenavirus</taxon>
    </lineage>
</organism>
<comment type="function">
    <molecule>Glycoprotein G1</molecule>
    <text evidence="2 3">Interacts with the host receptor (By similarity). Mediates virus attachment to host TFRC. This attachment induces virion internalization predominantly through clathrin-mediated endocytosis (PubMed:17287727).</text>
</comment>
<comment type="function">
    <molecule>Glycoprotein G2</molecule>
    <text evidence="2">Class I viral fusion protein that directs fusion of viral and host endosomal membranes, leading to delivery of the nucleocapsid into the cytoplasm. Membrane fusion is mediated by irreversible conformational changes induced upon acidification in the endosome.</text>
</comment>
<comment type="function">
    <text evidence="2">Stable signal peptide (SSP): cleaved and functions as a signal peptide. In addition, it is also retained as the third component of the GP complex. The SSP is required for efficient glycoprotein expression, post-translational maturation cleavage of GP1 and GP2, glycoprotein transport to the cell surface plasma membrane, formation of infectious virus particles, and acid pH-dependent glycoprotein-mediated cell fusion.</text>
</comment>
<comment type="subunit">
    <molecule>Glycoprotein G1</molecule>
    <text evidence="2">Homotetramer; disulfide-linked.</text>
</comment>
<comment type="subunit">
    <molecule>Glycoprotein G2</molecule>
    <text evidence="2 3">Homotetramer. GP2 homotetramers bind through ionic interactions with GP1 homotetramers to form the GP complex together with the stable signal peptide. The GP-C polyprotein interacts with the host protease MBTPS1/SKI-1 resulting in the polyprotein processing.</text>
</comment>
<comment type="subcellular location">
    <molecule>Glycoprotein G1</molecule>
    <subcellularLocation>
        <location evidence="2">Virion membrane</location>
        <topology evidence="2">Peripheral membrane protein</topology>
    </subcellularLocation>
    <subcellularLocation>
        <location evidence="2">Host endoplasmic reticulum membrane</location>
        <topology evidence="2">Peripheral membrane protein</topology>
    </subcellularLocation>
    <subcellularLocation>
        <location evidence="2">Host Golgi apparatus membrane</location>
        <topology evidence="2">Peripheral membrane protein</topology>
    </subcellularLocation>
    <subcellularLocation>
        <location evidence="2">Host cell membrane</location>
        <topology evidence="2">Peripheral membrane protein</topology>
    </subcellularLocation>
</comment>
<comment type="subcellular location">
    <molecule>Glycoprotein G2</molecule>
    <subcellularLocation>
        <location evidence="2">Virion membrane</location>
        <topology evidence="2">Single-pass membrane protein</topology>
    </subcellularLocation>
    <subcellularLocation>
        <location evidence="2">Host endoplasmic reticulum membrane</location>
        <topology evidence="2">Single-pass membrane protein</topology>
    </subcellularLocation>
    <subcellularLocation>
        <location evidence="2">Host Golgi apparatus membrane</location>
        <topology evidence="2">Single-pass membrane protein</topology>
    </subcellularLocation>
    <subcellularLocation>
        <location evidence="2">Host cell membrane</location>
        <topology evidence="2">Single-pass membrane protein</topology>
    </subcellularLocation>
    <text evidence="2">Binding to the stable signal peptide masks endogenous ER localization signals in the cytoplasmic domain of G2 to ensure that only the fully assembled, tripartite GP complex is transported for virion assembly.</text>
</comment>
<comment type="subcellular location">
    <molecule>Stable signal peptide</molecule>
    <subcellularLocation>
        <location evidence="2">Virion membrane</location>
        <topology evidence="2">Multi-pass membrane protein</topology>
    </subcellularLocation>
    <subcellularLocation>
        <location evidence="2">Host endoplasmic reticulum membrane</location>
        <topology evidence="2">Multi-pass membrane protein</topology>
    </subcellularLocation>
    <subcellularLocation>
        <location evidence="2">Host Golgi apparatus membrane</location>
        <topology evidence="2">Multi-pass membrane protein</topology>
    </subcellularLocation>
    <subcellularLocation>
        <location evidence="2">Host cell membrane</location>
        <topology evidence="2">Multi-pass membrane protein</topology>
    </subcellularLocation>
</comment>
<comment type="domain">
    <text evidence="2">The cytoplasmic domain of GP2 plays a role in ER location. It also contains a zinc-binding domain that allows SSP retention in the GPC complex by accepting a cysteine from SSP as the fourth ligand.</text>
</comment>
<comment type="PTM">
    <molecule>Pre-glycoprotein polyprotein GP complex</molecule>
    <text evidence="2">Specific enzymatic cleavages in vivo yield mature proteins. GP-C polyprotein is cleaved in the endoplasmic reticulum by the host protease MBTPS1. Only cleaved glycoprotein is incorporated into virions.</text>
</comment>
<comment type="PTM">
    <molecule>Stable signal peptide</molecule>
    <text evidence="2">The SSP remains stably associated with the GP complex following cleavage by signal peptidase and plays crucial roles in the trafficking of GP through the secretory pathway.</text>
</comment>
<comment type="PTM">
    <molecule>Stable signal peptide</molecule>
    <text evidence="2">Myristoylation is necessary for GP2-mediated fusion activity.</text>
</comment>
<comment type="similarity">
    <text evidence="2">Belongs to the arenaviridae GPC protein family.</text>
</comment>